<protein>
    <recommendedName>
        <fullName>Uncharacterized protein C18B11.11</fullName>
    </recommendedName>
</protein>
<sequence>MKALDIDTILTQISNQQSLDKRYKRIKRLINNEQFCKNVILQKLVDSTKDIIENKVHGNILAATISLWTHAAEKHKEMSSDDRALLFNELSKVPNSEYYPATVDALIVITSQGERTESFSNDILKVLSEWLTDLFTIIDDMRAQSRKSFKGSAELRNYTRCFRQIILLLTNMFRVGFNLFDEMEVSSMLANCVWVSKSTTDEEDIALVFSLLNCIISYGRISSAVLYSIVEVVCRAKFGLVASSQSAQQIVEKLLKTATKYEALNSLKRIMEETDEGSYIAIMGGIQIVSALFTDIPRSVYCTRGMLLGFLQRSLKNKSSRIALETTRSLYNALERRSFVEVLYADEWISLLDLLVEISSSLPKSLNYRPGTWQHIEPNIIESIASYQLQHLLLFNEILKPDSNHFVLEKFHEFLKINFSYLTPTLSQKLFTVLDLRSQLPYSEGWLEDQTILLKSYFDTSFSLDFHVYLIGLFRKVLFACPVELRPEVYARMLCPLVKSLDKSSSEVIIDEVISLVCDLSWIYPSNVFHEVKDSLCFYAHNSSNGDLQLRSIQAIVSLTFYYVLLPEFKSVLYDGLVEISCDFKIRRTFRIPVLKLLLQLRINTNDYCFVNLSPAQLELISVYSTQWHNPFISEEAQRCRDNKVKDRDLSFSPVFQKFPLKVNTSATLSKDLMSLPINEWVKNVMYIVTHETDWKVVQYILINFTNQLRNTKMFTKTVEALQLLLNSLRDIINGKQSLNINFSDFFRIEDLLVSLSKILSVLMVYKDVLPPTAHEQFFQLLNRFAEKGDKTMESCIDTLITNCCAMQSFSIMHLPKFFSITMSSNLSERSLVNFLRLLHVVSDNWELNEGLEKETIQSICLFCLKVIRTKKEELDGHKKLVNPNTKVFCLYLVSFSYSIISNLFLGCETTERAQLASFLLKEFLNLKNGSHFEGYERVFYELLLRYTYSDERIESYPSDSRFHFNSSSKSWLYRGCVITINAEYETGDYQMILRRMSGTTIYRFWRNMRDRGAFEKSLMMEQSMVSSELKQKYLQEIAASHVFMETVLSPLDSPDEEPILIKPDARTEELIQSLDATHTKPVINIAVALQAGDVSDINTTVGWQLFYRLLESFGHEKKLDNGETIYVWQSKTIEMIFRYVSDPAEALESSLYSSLIIIGSDDLVGPDSLNWDSVDVPVIIKISLDSHLDALKMFDTLFHVKLEIITTGTDISHQSFWKLDQIISTNSIAPLLHSYLADIGLYQMIFENFAYVHPWLLRQQYIDTLYTIHQVPTTQRESSALPSDKTFDFTLFL</sequence>
<name>YA3B_SCHPO</name>
<feature type="chain" id="PRO_0000116390" description="Uncharacterized protein C18B11.11">
    <location>
        <begin position="1"/>
        <end position="1294"/>
    </location>
</feature>
<dbReference type="EMBL" id="CU329670">
    <property type="protein sequence ID" value="CAA92229.2"/>
    <property type="molecule type" value="Genomic_DNA"/>
</dbReference>
<dbReference type="PIR" id="T37903">
    <property type="entry name" value="S58307"/>
</dbReference>
<dbReference type="RefSeq" id="XP_001713038.1">
    <property type="nucleotide sequence ID" value="XM_001712986.2"/>
</dbReference>
<dbReference type="SMR" id="Q09716"/>
<dbReference type="BioGRID" id="280464">
    <property type="interactions" value="1"/>
</dbReference>
<dbReference type="FunCoup" id="Q09716">
    <property type="interactions" value="265"/>
</dbReference>
<dbReference type="STRING" id="284812.Q09716"/>
<dbReference type="iPTMnet" id="Q09716"/>
<dbReference type="PaxDb" id="4896-SPAC18B11.11.1"/>
<dbReference type="EnsemblFungi" id="SPAC18B11.11.1">
    <property type="protein sequence ID" value="SPAC18B11.11.1:pep"/>
    <property type="gene ID" value="SPAC18B11.11"/>
</dbReference>
<dbReference type="PomBase" id="SPAC18B11.11"/>
<dbReference type="VEuPathDB" id="FungiDB:SPAC18B11.11"/>
<dbReference type="eggNOG" id="KOG3687">
    <property type="taxonomic scope" value="Eukaryota"/>
</dbReference>
<dbReference type="HOGENOM" id="CLU_261985_0_0_1"/>
<dbReference type="InParanoid" id="Q09716"/>
<dbReference type="OMA" id="ATRFLMN"/>
<dbReference type="PhylomeDB" id="Q09716"/>
<dbReference type="PRO" id="PR:Q09716"/>
<dbReference type="Proteomes" id="UP000002485">
    <property type="component" value="Chromosome I"/>
</dbReference>
<dbReference type="GO" id="GO:0032153">
    <property type="term" value="C:cell division site"/>
    <property type="evidence" value="ECO:0007005"/>
    <property type="project" value="PomBase"/>
</dbReference>
<dbReference type="GO" id="GO:0005737">
    <property type="term" value="C:cytoplasm"/>
    <property type="evidence" value="ECO:0000318"/>
    <property type="project" value="GO_Central"/>
</dbReference>
<dbReference type="GO" id="GO:0005829">
    <property type="term" value="C:cytosol"/>
    <property type="evidence" value="ECO:0007005"/>
    <property type="project" value="PomBase"/>
</dbReference>
<dbReference type="GO" id="GO:0005634">
    <property type="term" value="C:nucleus"/>
    <property type="evidence" value="ECO:0007005"/>
    <property type="project" value="PomBase"/>
</dbReference>
<dbReference type="GO" id="GO:0033596">
    <property type="term" value="C:TSC1-TSC2 complex"/>
    <property type="evidence" value="ECO:0000318"/>
    <property type="project" value="GO_Central"/>
</dbReference>
<dbReference type="GO" id="GO:0005096">
    <property type="term" value="F:GTPase activator activity"/>
    <property type="evidence" value="ECO:0000318"/>
    <property type="project" value="GO_Central"/>
</dbReference>
<dbReference type="GO" id="GO:0032007">
    <property type="term" value="P:negative regulation of TOR signaling"/>
    <property type="evidence" value="ECO:0000318"/>
    <property type="project" value="GO_Central"/>
</dbReference>
<dbReference type="InterPro" id="IPR018515">
    <property type="entry name" value="Tuberin-type_domain"/>
</dbReference>
<dbReference type="InterPro" id="IPR027107">
    <property type="entry name" value="Tuberin/Ral-act_asu"/>
</dbReference>
<dbReference type="InterPro" id="IPR024584">
    <property type="entry name" value="Tuberin_N"/>
</dbReference>
<dbReference type="PANTHER" id="PTHR10063">
    <property type="entry name" value="TUBERIN"/>
    <property type="match status" value="1"/>
</dbReference>
<dbReference type="PANTHER" id="PTHR10063:SF0">
    <property type="entry name" value="TUBERIN"/>
    <property type="match status" value="1"/>
</dbReference>
<dbReference type="Pfam" id="PF11864">
    <property type="entry name" value="DUF3384"/>
    <property type="match status" value="1"/>
</dbReference>
<dbReference type="Pfam" id="PF03542">
    <property type="entry name" value="Tuberin"/>
    <property type="match status" value="1"/>
</dbReference>
<keyword id="KW-1185">Reference proteome</keyword>
<organism>
    <name type="scientific">Schizosaccharomyces pombe (strain 972 / ATCC 24843)</name>
    <name type="common">Fission yeast</name>
    <dbReference type="NCBI Taxonomy" id="284812"/>
    <lineage>
        <taxon>Eukaryota</taxon>
        <taxon>Fungi</taxon>
        <taxon>Dikarya</taxon>
        <taxon>Ascomycota</taxon>
        <taxon>Taphrinomycotina</taxon>
        <taxon>Schizosaccharomycetes</taxon>
        <taxon>Schizosaccharomycetales</taxon>
        <taxon>Schizosaccharomycetaceae</taxon>
        <taxon>Schizosaccharomyces</taxon>
    </lineage>
</organism>
<proteinExistence type="predicted"/>
<reference key="1">
    <citation type="journal article" date="2002" name="Nature">
        <title>The genome sequence of Schizosaccharomyces pombe.</title>
        <authorList>
            <person name="Wood V."/>
            <person name="Gwilliam R."/>
            <person name="Rajandream M.A."/>
            <person name="Lyne M.H."/>
            <person name="Lyne R."/>
            <person name="Stewart A."/>
            <person name="Sgouros J.G."/>
            <person name="Peat N."/>
            <person name="Hayles J."/>
            <person name="Baker S.G."/>
            <person name="Basham D."/>
            <person name="Bowman S."/>
            <person name="Brooks K."/>
            <person name="Brown D."/>
            <person name="Brown S."/>
            <person name="Chillingworth T."/>
            <person name="Churcher C.M."/>
            <person name="Collins M."/>
            <person name="Connor R."/>
            <person name="Cronin A."/>
            <person name="Davis P."/>
            <person name="Feltwell T."/>
            <person name="Fraser A."/>
            <person name="Gentles S."/>
            <person name="Goble A."/>
            <person name="Hamlin N."/>
            <person name="Harris D.E."/>
            <person name="Hidalgo J."/>
            <person name="Hodgson G."/>
            <person name="Holroyd S."/>
            <person name="Hornsby T."/>
            <person name="Howarth S."/>
            <person name="Huckle E.J."/>
            <person name="Hunt S."/>
            <person name="Jagels K."/>
            <person name="James K.D."/>
            <person name="Jones L."/>
            <person name="Jones M."/>
            <person name="Leather S."/>
            <person name="McDonald S."/>
            <person name="McLean J."/>
            <person name="Mooney P."/>
            <person name="Moule S."/>
            <person name="Mungall K.L."/>
            <person name="Murphy L.D."/>
            <person name="Niblett D."/>
            <person name="Odell C."/>
            <person name="Oliver K."/>
            <person name="O'Neil S."/>
            <person name="Pearson D."/>
            <person name="Quail M.A."/>
            <person name="Rabbinowitsch E."/>
            <person name="Rutherford K.M."/>
            <person name="Rutter S."/>
            <person name="Saunders D."/>
            <person name="Seeger K."/>
            <person name="Sharp S."/>
            <person name="Skelton J."/>
            <person name="Simmonds M.N."/>
            <person name="Squares R."/>
            <person name="Squares S."/>
            <person name="Stevens K."/>
            <person name="Taylor K."/>
            <person name="Taylor R.G."/>
            <person name="Tivey A."/>
            <person name="Walsh S.V."/>
            <person name="Warren T."/>
            <person name="Whitehead S."/>
            <person name="Woodward J.R."/>
            <person name="Volckaert G."/>
            <person name="Aert R."/>
            <person name="Robben J."/>
            <person name="Grymonprez B."/>
            <person name="Weltjens I."/>
            <person name="Vanstreels E."/>
            <person name="Rieger M."/>
            <person name="Schaefer M."/>
            <person name="Mueller-Auer S."/>
            <person name="Gabel C."/>
            <person name="Fuchs M."/>
            <person name="Duesterhoeft A."/>
            <person name="Fritzc C."/>
            <person name="Holzer E."/>
            <person name="Moestl D."/>
            <person name="Hilbert H."/>
            <person name="Borzym K."/>
            <person name="Langer I."/>
            <person name="Beck A."/>
            <person name="Lehrach H."/>
            <person name="Reinhardt R."/>
            <person name="Pohl T.M."/>
            <person name="Eger P."/>
            <person name="Zimmermann W."/>
            <person name="Wedler H."/>
            <person name="Wambutt R."/>
            <person name="Purnelle B."/>
            <person name="Goffeau A."/>
            <person name="Cadieu E."/>
            <person name="Dreano S."/>
            <person name="Gloux S."/>
            <person name="Lelaure V."/>
            <person name="Mottier S."/>
            <person name="Galibert F."/>
            <person name="Aves S.J."/>
            <person name="Xiang Z."/>
            <person name="Hunt C."/>
            <person name="Moore K."/>
            <person name="Hurst S.M."/>
            <person name="Lucas M."/>
            <person name="Rochet M."/>
            <person name="Gaillardin C."/>
            <person name="Tallada V.A."/>
            <person name="Garzon A."/>
            <person name="Thode G."/>
            <person name="Daga R.R."/>
            <person name="Cruzado L."/>
            <person name="Jimenez J."/>
            <person name="Sanchez M."/>
            <person name="del Rey F."/>
            <person name="Benito J."/>
            <person name="Dominguez A."/>
            <person name="Revuelta J.L."/>
            <person name="Moreno S."/>
            <person name="Armstrong J."/>
            <person name="Forsburg S.L."/>
            <person name="Cerutti L."/>
            <person name="Lowe T."/>
            <person name="McCombie W.R."/>
            <person name="Paulsen I."/>
            <person name="Potashkin J."/>
            <person name="Shpakovski G.V."/>
            <person name="Ussery D."/>
            <person name="Barrell B.G."/>
            <person name="Nurse P."/>
        </authorList>
    </citation>
    <scope>NUCLEOTIDE SEQUENCE [LARGE SCALE GENOMIC DNA]</scope>
    <source>
        <strain>972 / ATCC 24843</strain>
    </source>
</reference>
<accession>Q09716</accession>
<gene>
    <name type="ORF">SPAC18B11.11</name>
    <name type="ORF">SPAC1F5.01</name>
</gene>